<accession>C3K1E6</accession>
<feature type="chain" id="PRO_1000214829" description="ATP synthase subunit beta">
    <location>
        <begin position="1"/>
        <end position="458"/>
    </location>
</feature>
<feature type="binding site" evidence="1">
    <location>
        <begin position="148"/>
        <end position="155"/>
    </location>
    <ligand>
        <name>ATP</name>
        <dbReference type="ChEBI" id="CHEBI:30616"/>
    </ligand>
</feature>
<dbReference type="EC" id="7.1.2.2" evidence="1"/>
<dbReference type="EMBL" id="AM181176">
    <property type="protein sequence ID" value="CAY53725.1"/>
    <property type="molecule type" value="Genomic_DNA"/>
</dbReference>
<dbReference type="RefSeq" id="WP_015886645.1">
    <property type="nucleotide sequence ID" value="NC_012660.1"/>
</dbReference>
<dbReference type="SMR" id="C3K1E6"/>
<dbReference type="STRING" id="294.SRM1_00041"/>
<dbReference type="GeneID" id="97822914"/>
<dbReference type="eggNOG" id="COG0055">
    <property type="taxonomic scope" value="Bacteria"/>
</dbReference>
<dbReference type="HOGENOM" id="CLU_022398_0_2_6"/>
<dbReference type="OrthoDB" id="9801639at2"/>
<dbReference type="GO" id="GO:0005886">
    <property type="term" value="C:plasma membrane"/>
    <property type="evidence" value="ECO:0007669"/>
    <property type="project" value="UniProtKB-SubCell"/>
</dbReference>
<dbReference type="GO" id="GO:0045259">
    <property type="term" value="C:proton-transporting ATP synthase complex"/>
    <property type="evidence" value="ECO:0007669"/>
    <property type="project" value="UniProtKB-KW"/>
</dbReference>
<dbReference type="GO" id="GO:0005524">
    <property type="term" value="F:ATP binding"/>
    <property type="evidence" value="ECO:0007669"/>
    <property type="project" value="UniProtKB-UniRule"/>
</dbReference>
<dbReference type="GO" id="GO:0016887">
    <property type="term" value="F:ATP hydrolysis activity"/>
    <property type="evidence" value="ECO:0007669"/>
    <property type="project" value="InterPro"/>
</dbReference>
<dbReference type="GO" id="GO:0046933">
    <property type="term" value="F:proton-transporting ATP synthase activity, rotational mechanism"/>
    <property type="evidence" value="ECO:0007669"/>
    <property type="project" value="UniProtKB-UniRule"/>
</dbReference>
<dbReference type="CDD" id="cd18110">
    <property type="entry name" value="ATP-synt_F1_beta_C"/>
    <property type="match status" value="1"/>
</dbReference>
<dbReference type="CDD" id="cd18115">
    <property type="entry name" value="ATP-synt_F1_beta_N"/>
    <property type="match status" value="1"/>
</dbReference>
<dbReference type="CDD" id="cd01133">
    <property type="entry name" value="F1-ATPase_beta_CD"/>
    <property type="match status" value="1"/>
</dbReference>
<dbReference type="FunFam" id="1.10.1140.10:FF:000001">
    <property type="entry name" value="ATP synthase subunit beta"/>
    <property type="match status" value="1"/>
</dbReference>
<dbReference type="FunFam" id="2.40.10.170:FF:000005">
    <property type="entry name" value="ATP synthase subunit beta"/>
    <property type="match status" value="1"/>
</dbReference>
<dbReference type="FunFam" id="3.40.50.300:FF:000004">
    <property type="entry name" value="ATP synthase subunit beta"/>
    <property type="match status" value="1"/>
</dbReference>
<dbReference type="Gene3D" id="2.40.10.170">
    <property type="match status" value="1"/>
</dbReference>
<dbReference type="Gene3D" id="1.10.1140.10">
    <property type="entry name" value="Bovine Mitochondrial F1-atpase, Atp Synthase Beta Chain, Chain D, domain 3"/>
    <property type="match status" value="1"/>
</dbReference>
<dbReference type="Gene3D" id="3.40.50.300">
    <property type="entry name" value="P-loop containing nucleotide triphosphate hydrolases"/>
    <property type="match status" value="1"/>
</dbReference>
<dbReference type="HAMAP" id="MF_01347">
    <property type="entry name" value="ATP_synth_beta_bact"/>
    <property type="match status" value="1"/>
</dbReference>
<dbReference type="InterPro" id="IPR003593">
    <property type="entry name" value="AAA+_ATPase"/>
</dbReference>
<dbReference type="InterPro" id="IPR055190">
    <property type="entry name" value="ATP-synt_VA_C"/>
</dbReference>
<dbReference type="InterPro" id="IPR005722">
    <property type="entry name" value="ATP_synth_F1_bsu"/>
</dbReference>
<dbReference type="InterPro" id="IPR020003">
    <property type="entry name" value="ATPase_a/bsu_AS"/>
</dbReference>
<dbReference type="InterPro" id="IPR050053">
    <property type="entry name" value="ATPase_alpha/beta_chains"/>
</dbReference>
<dbReference type="InterPro" id="IPR004100">
    <property type="entry name" value="ATPase_F1/V1/A1_a/bsu_N"/>
</dbReference>
<dbReference type="InterPro" id="IPR036121">
    <property type="entry name" value="ATPase_F1/V1/A1_a/bsu_N_sf"/>
</dbReference>
<dbReference type="InterPro" id="IPR000194">
    <property type="entry name" value="ATPase_F1/V1/A1_a/bsu_nucl-bd"/>
</dbReference>
<dbReference type="InterPro" id="IPR024034">
    <property type="entry name" value="ATPase_F1/V1_b/a_C"/>
</dbReference>
<dbReference type="InterPro" id="IPR027417">
    <property type="entry name" value="P-loop_NTPase"/>
</dbReference>
<dbReference type="NCBIfam" id="TIGR01039">
    <property type="entry name" value="atpD"/>
    <property type="match status" value="1"/>
</dbReference>
<dbReference type="PANTHER" id="PTHR15184">
    <property type="entry name" value="ATP SYNTHASE"/>
    <property type="match status" value="1"/>
</dbReference>
<dbReference type="PANTHER" id="PTHR15184:SF71">
    <property type="entry name" value="ATP SYNTHASE SUBUNIT BETA, MITOCHONDRIAL"/>
    <property type="match status" value="1"/>
</dbReference>
<dbReference type="Pfam" id="PF00006">
    <property type="entry name" value="ATP-synt_ab"/>
    <property type="match status" value="1"/>
</dbReference>
<dbReference type="Pfam" id="PF02874">
    <property type="entry name" value="ATP-synt_ab_N"/>
    <property type="match status" value="1"/>
</dbReference>
<dbReference type="Pfam" id="PF22919">
    <property type="entry name" value="ATP-synt_VA_C"/>
    <property type="match status" value="1"/>
</dbReference>
<dbReference type="SMART" id="SM00382">
    <property type="entry name" value="AAA"/>
    <property type="match status" value="1"/>
</dbReference>
<dbReference type="SUPFAM" id="SSF47917">
    <property type="entry name" value="C-terminal domain of alpha and beta subunits of F1 ATP synthase"/>
    <property type="match status" value="1"/>
</dbReference>
<dbReference type="SUPFAM" id="SSF50615">
    <property type="entry name" value="N-terminal domain of alpha and beta subunits of F1 ATP synthase"/>
    <property type="match status" value="1"/>
</dbReference>
<dbReference type="SUPFAM" id="SSF52540">
    <property type="entry name" value="P-loop containing nucleoside triphosphate hydrolases"/>
    <property type="match status" value="1"/>
</dbReference>
<dbReference type="PROSITE" id="PS00152">
    <property type="entry name" value="ATPASE_ALPHA_BETA"/>
    <property type="match status" value="1"/>
</dbReference>
<sequence length="458" mass="49490">MSSGRIVQIIGAVIDVEFPRDSVPSIYNALKVQGAETTLEVQQQLGDGVVRTIAMGSTEGLKRGLDVVDTGAAISVPVGKATLGRIMDVLGNPIDEAGPIDTEERWGIHRPAPSFAEQAGGNDLLETGIKVIDLVCPFAKGGKVGLFGGAGVGKTVNMMELIRNIAIEHSGYSVFAGVGERTREGNDFYHEMKDSNVLDKVALVYGQMNEPPGNRLRVALTGLTMAEKFRDEGNDVLLFVDNIYRYTLAGTEVSALLGRMPSAVGYQPTLAEEMGVLQERITSTKEGSITSIQAVYVPADDLTDPSPATTFAHLDATVVLSRDIASLGIYPAVDPLDSTSRQLDPNVIGQEHYDTARGVQYVLQRYKELKDIIAILGMDELSETDKQLVSRARKIQRFLSQPFFVAEVFTGASGKYVSLKDTIAGFKGILNGDYDHLPEQAFYMVGGIEEAIEKAKKL</sequence>
<name>ATPB_PSEFS</name>
<protein>
    <recommendedName>
        <fullName evidence="1">ATP synthase subunit beta</fullName>
        <ecNumber evidence="1">7.1.2.2</ecNumber>
    </recommendedName>
    <alternativeName>
        <fullName evidence="1">ATP synthase F1 sector subunit beta</fullName>
    </alternativeName>
    <alternativeName>
        <fullName evidence="1">F-ATPase subunit beta</fullName>
    </alternativeName>
</protein>
<keyword id="KW-0066">ATP synthesis</keyword>
<keyword id="KW-0067">ATP-binding</keyword>
<keyword id="KW-0997">Cell inner membrane</keyword>
<keyword id="KW-1003">Cell membrane</keyword>
<keyword id="KW-0139">CF(1)</keyword>
<keyword id="KW-0375">Hydrogen ion transport</keyword>
<keyword id="KW-0406">Ion transport</keyword>
<keyword id="KW-0472">Membrane</keyword>
<keyword id="KW-0547">Nucleotide-binding</keyword>
<keyword id="KW-1278">Translocase</keyword>
<keyword id="KW-0813">Transport</keyword>
<comment type="function">
    <text evidence="1">Produces ATP from ADP in the presence of a proton gradient across the membrane. The catalytic sites are hosted primarily by the beta subunits.</text>
</comment>
<comment type="catalytic activity">
    <reaction evidence="1">
        <text>ATP + H2O + 4 H(+)(in) = ADP + phosphate + 5 H(+)(out)</text>
        <dbReference type="Rhea" id="RHEA:57720"/>
        <dbReference type="ChEBI" id="CHEBI:15377"/>
        <dbReference type="ChEBI" id="CHEBI:15378"/>
        <dbReference type="ChEBI" id="CHEBI:30616"/>
        <dbReference type="ChEBI" id="CHEBI:43474"/>
        <dbReference type="ChEBI" id="CHEBI:456216"/>
        <dbReference type="EC" id="7.1.2.2"/>
    </reaction>
</comment>
<comment type="subunit">
    <text evidence="1">F-type ATPases have 2 components, CF(1) - the catalytic core - and CF(0) - the membrane proton channel. CF(1) has five subunits: alpha(3), beta(3), gamma(1), delta(1), epsilon(1). CF(0) has three main subunits: a(1), b(2) and c(9-12). The alpha and beta chains form an alternating ring which encloses part of the gamma chain. CF(1) is attached to CF(0) by a central stalk formed by the gamma and epsilon chains, while a peripheral stalk is formed by the delta and b chains.</text>
</comment>
<comment type="subcellular location">
    <subcellularLocation>
        <location evidence="1">Cell inner membrane</location>
        <topology evidence="1">Peripheral membrane protein</topology>
    </subcellularLocation>
</comment>
<comment type="similarity">
    <text evidence="1">Belongs to the ATPase alpha/beta chains family.</text>
</comment>
<gene>
    <name evidence="1" type="primary">atpD</name>
    <name type="ordered locus">PFLU_6118</name>
</gene>
<reference key="1">
    <citation type="journal article" date="2009" name="Genome Biol.">
        <title>Genomic and genetic analyses of diversity and plant interactions of Pseudomonas fluorescens.</title>
        <authorList>
            <person name="Silby M.W."/>
            <person name="Cerdeno-Tarraga A.M."/>
            <person name="Vernikos G.S."/>
            <person name="Giddens S.R."/>
            <person name="Jackson R.W."/>
            <person name="Preston G.M."/>
            <person name="Zhang X.-X."/>
            <person name="Moon C.D."/>
            <person name="Gehrig S.M."/>
            <person name="Godfrey S.A.C."/>
            <person name="Knight C.G."/>
            <person name="Malone J.G."/>
            <person name="Robinson Z."/>
            <person name="Spiers A.J."/>
            <person name="Harris S."/>
            <person name="Challis G.L."/>
            <person name="Yaxley A.M."/>
            <person name="Harris D."/>
            <person name="Seeger K."/>
            <person name="Murphy L."/>
            <person name="Rutter S."/>
            <person name="Squares R."/>
            <person name="Quail M.A."/>
            <person name="Saunders E."/>
            <person name="Mavromatis K."/>
            <person name="Brettin T.S."/>
            <person name="Bentley S.D."/>
            <person name="Hothersall J."/>
            <person name="Stephens E."/>
            <person name="Thomas C.M."/>
            <person name="Parkhill J."/>
            <person name="Levy S.B."/>
            <person name="Rainey P.B."/>
            <person name="Thomson N.R."/>
        </authorList>
    </citation>
    <scope>NUCLEOTIDE SEQUENCE [LARGE SCALE GENOMIC DNA]</scope>
    <source>
        <strain>SBW25</strain>
    </source>
</reference>
<organism>
    <name type="scientific">Pseudomonas fluorescens (strain SBW25)</name>
    <dbReference type="NCBI Taxonomy" id="216595"/>
    <lineage>
        <taxon>Bacteria</taxon>
        <taxon>Pseudomonadati</taxon>
        <taxon>Pseudomonadota</taxon>
        <taxon>Gammaproteobacteria</taxon>
        <taxon>Pseudomonadales</taxon>
        <taxon>Pseudomonadaceae</taxon>
        <taxon>Pseudomonas</taxon>
    </lineage>
</organism>
<proteinExistence type="inferred from homology"/>
<evidence type="ECO:0000255" key="1">
    <source>
        <dbReference type="HAMAP-Rule" id="MF_01347"/>
    </source>
</evidence>